<evidence type="ECO:0000250" key="1">
    <source>
        <dbReference type="UniProtKB" id="P03081"/>
    </source>
</evidence>
<sequence>MDKTLSREEAKQLMQLLCLDMSCWGNLPLMRRQYLVKCKEYHPDKGGNEESMKLLNSLYLKLQDSVSSVHDLNEEEDNIWQSSQVYCKDLCCNKFRLVGAIYGDYYEAYIMKQWDVCIHGYNHECQCIHCILSKYHKEKYKIYRKPPVWIECYCYKCYREWFFFPISMQTFFFWKVIIFNTEIRAVQPLLR</sequence>
<accession>P0DOI9</accession>
<accession>A3R4N0</accession>
<accession>A3R4N5</accession>
<accession>A3R4P0</accession>
<protein>
    <recommendedName>
        <fullName>Small t antigen</fullName>
        <shortName>ST</shortName>
        <shortName>ST-AG</shortName>
    </recommendedName>
</protein>
<keyword id="KW-0007">Acetylation</keyword>
<keyword id="KW-0010">Activator</keyword>
<keyword id="KW-0025">Alternative splicing</keyword>
<keyword id="KW-0244">Early protein</keyword>
<keyword id="KW-1035">Host cytoplasm</keyword>
<keyword id="KW-1048">Host nucleus</keyword>
<keyword id="KW-0945">Host-virus interaction</keyword>
<keyword id="KW-0479">Metal-binding</keyword>
<keyword id="KW-0553">Oncogene</keyword>
<keyword id="KW-0597">Phosphoprotein</keyword>
<keyword id="KW-0804">Transcription</keyword>
<keyword id="KW-0805">Transcription regulation</keyword>
<keyword id="KW-0862">Zinc</keyword>
<keyword id="KW-0863">Zinc-finger</keyword>
<name>ST_POVK6</name>
<dbReference type="EMBL" id="EF127906">
    <property type="protein sequence ID" value="ABN09920.1"/>
    <property type="molecule type" value="Genomic_DNA"/>
</dbReference>
<dbReference type="SMR" id="P0DOI9"/>
<dbReference type="KEGG" id="vg:5076885"/>
<dbReference type="Proteomes" id="UP000107189">
    <property type="component" value="Genome"/>
</dbReference>
<dbReference type="GO" id="GO:0030430">
    <property type="term" value="C:host cell cytoplasm"/>
    <property type="evidence" value="ECO:0007669"/>
    <property type="project" value="UniProtKB-SubCell"/>
</dbReference>
<dbReference type="GO" id="GO:0042025">
    <property type="term" value="C:host cell nucleus"/>
    <property type="evidence" value="ECO:0007669"/>
    <property type="project" value="UniProtKB-SubCell"/>
</dbReference>
<dbReference type="GO" id="GO:0008270">
    <property type="term" value="F:zinc ion binding"/>
    <property type="evidence" value="ECO:0007669"/>
    <property type="project" value="UniProtKB-KW"/>
</dbReference>
<dbReference type="Gene3D" id="1.10.287.110">
    <property type="entry name" value="DnaJ domain"/>
    <property type="match status" value="1"/>
</dbReference>
<dbReference type="Gene3D" id="1.20.120.1860">
    <property type="entry name" value="Small t-antigen, unique domain"/>
    <property type="match status" value="1"/>
</dbReference>
<dbReference type="InterPro" id="IPR001623">
    <property type="entry name" value="DnaJ_domain"/>
</dbReference>
<dbReference type="InterPro" id="IPR036869">
    <property type="entry name" value="J_dom_sf"/>
</dbReference>
<dbReference type="InterPro" id="IPR003354">
    <property type="entry name" value="Papo_T_antigen"/>
</dbReference>
<dbReference type="InterPro" id="IPR036092">
    <property type="entry name" value="Papo_T_antigensf"/>
</dbReference>
<dbReference type="Pfam" id="PF02380">
    <property type="entry name" value="Papo_T_antigen"/>
    <property type="match status" value="1"/>
</dbReference>
<dbReference type="SMART" id="SM00271">
    <property type="entry name" value="DnaJ"/>
    <property type="match status" value="1"/>
</dbReference>
<dbReference type="SUPFAM" id="SSF46565">
    <property type="entry name" value="Chaperone J-domain"/>
    <property type="match status" value="1"/>
</dbReference>
<dbReference type="SUPFAM" id="SSF161240">
    <property type="entry name" value="T-antigen specific domain-like"/>
    <property type="match status" value="1"/>
</dbReference>
<reference key="1">
    <citation type="journal article" date="2007" name="J. Virol.">
        <title>Identification of a third human polyomavirus.</title>
        <authorList>
            <person name="Allander T."/>
            <person name="Andreasson K."/>
            <person name="Gupta S."/>
            <person name="Bjerkner A."/>
            <person name="Bogdanovic G."/>
            <person name="Persson M.A."/>
            <person name="Dalianis T."/>
            <person name="Ramqvist T."/>
            <person name="Andersson B."/>
        </authorList>
    </citation>
    <scope>NUCLEOTIDE SEQUENCE [GENOMIC DNA]</scope>
</reference>
<comment type="function">
    <text evidence="1">Promotes efficient viral genome replication by accelerating both G1 and S phase progression of the cell cycle. Inhibits host PP2A by binding to the A subunit, thereby displacing lower affinity regulatory B subunit. Inactivation of PP2A in turn results in the transactivation of cyclin A and cyclin D1 promoters. Late during the infection cycle, ST may induce dephosphorylation of host MTOR, leading to the inhibition of cap-dependent translation. May establish and maintain high levels of viral genomes during persistent infection in cell culture.</text>
</comment>
<comment type="subunit">
    <text evidence="1">Interacts with host PPP2R1A; the interaction inhibits PP2A activity.</text>
</comment>
<comment type="subcellular location">
    <subcellularLocation>
        <location>Host cytoplasm</location>
    </subcellularLocation>
    <subcellularLocation>
        <location evidence="1">Host nucleus</location>
    </subcellularLocation>
</comment>
<comment type="alternative products">
    <event type="alternative splicing"/>
    <isoform>
        <id>P0DOI9-1</id>
        <id>A3R4N5-1</id>
        <name>Small t antigen</name>
        <sequence type="displayed"/>
    </isoform>
    <isoform>
        <id>P0DOI6-1</id>
        <id>A3R4N4-1</id>
        <name>Large T antigen</name>
        <sequence type="external"/>
    </isoform>
</comment>
<comment type="domain">
    <text evidence="1">The common region of ST and LT proteins comprises the J domain. This domain is essential for multiple viral activities, including virion assembly, viral DNA replication, transformation and transcriptional activation. This domain is also required for cyclin A-transactivating activity of ST.</text>
</comment>
<organismHost>
    <name type="scientific">Homo sapiens</name>
    <name type="common">Human</name>
    <dbReference type="NCBI Taxonomy" id="9606"/>
</organismHost>
<proteinExistence type="inferred from homology"/>
<organism>
    <name type="scientific">KI polyomavirus (isolate Stockholm 60)</name>
    <name type="common">KIPyV</name>
    <dbReference type="NCBI Taxonomy" id="423446"/>
    <lineage>
        <taxon>Viruses</taxon>
        <taxon>Monodnaviria</taxon>
        <taxon>Shotokuvirae</taxon>
        <taxon>Cossaviricota</taxon>
        <taxon>Papovaviricetes</taxon>
        <taxon>Sepolyvirales</taxon>
        <taxon>Polyomaviridae</taxon>
        <taxon>Betapolyomavirus</taxon>
        <taxon>Betapolyomavirus tertihominis</taxon>
    </lineage>
</organism>
<feature type="chain" id="PRO_0000442716" description="Small t antigen">
    <location>
        <begin position="1"/>
        <end position="191"/>
    </location>
</feature>
<feature type="domain" description="J">
    <location>
        <begin position="12"/>
        <end position="80"/>
    </location>
</feature>
<feature type="zinc finger region" description="C4-type; atypical">
    <location>
        <begin position="117"/>
        <end position="130"/>
    </location>
</feature>
<feature type="zinc finger region" description="H1C3-type; atypical">
    <location>
        <begin position="136"/>
        <end position="157"/>
    </location>
</feature>
<feature type="modified residue" description="N-acetylmethionine; by host" evidence="1">
    <location>
        <position position="1"/>
    </location>
</feature>